<organism>
    <name type="scientific">Pteronotus personatus</name>
    <name type="common">Wagner's mustached bat</name>
    <dbReference type="NCBI Taxonomy" id="118856"/>
    <lineage>
        <taxon>Eukaryota</taxon>
        <taxon>Metazoa</taxon>
        <taxon>Chordata</taxon>
        <taxon>Craniata</taxon>
        <taxon>Vertebrata</taxon>
        <taxon>Euteleostomi</taxon>
        <taxon>Mammalia</taxon>
        <taxon>Eutheria</taxon>
        <taxon>Laurasiatheria</taxon>
        <taxon>Chiroptera</taxon>
        <taxon>Yangochiroptera</taxon>
        <taxon>Mormoopidae</taxon>
        <taxon>Pteronotus</taxon>
    </lineage>
</organism>
<name>CYB_PTEPR</name>
<accession>Q9B365</accession>
<proteinExistence type="inferred from homology"/>
<gene>
    <name type="primary">MT-CYB</name>
    <name type="synonym">COB</name>
    <name type="synonym">CYTB</name>
    <name type="synonym">MTCYB</name>
</gene>
<evidence type="ECO:0000250" key="1"/>
<evidence type="ECO:0000250" key="2">
    <source>
        <dbReference type="UniProtKB" id="P00157"/>
    </source>
</evidence>
<evidence type="ECO:0000255" key="3">
    <source>
        <dbReference type="PROSITE-ProRule" id="PRU00967"/>
    </source>
</evidence>
<evidence type="ECO:0000255" key="4">
    <source>
        <dbReference type="PROSITE-ProRule" id="PRU00968"/>
    </source>
</evidence>
<feature type="chain" id="PRO_0000061464" description="Cytochrome b">
    <location>
        <begin position="1"/>
        <end position="379"/>
    </location>
</feature>
<feature type="transmembrane region" description="Helical" evidence="2">
    <location>
        <begin position="33"/>
        <end position="53"/>
    </location>
</feature>
<feature type="transmembrane region" description="Helical" evidence="2">
    <location>
        <begin position="77"/>
        <end position="98"/>
    </location>
</feature>
<feature type="transmembrane region" description="Helical" evidence="2">
    <location>
        <begin position="113"/>
        <end position="133"/>
    </location>
</feature>
<feature type="transmembrane region" description="Helical" evidence="2">
    <location>
        <begin position="178"/>
        <end position="198"/>
    </location>
</feature>
<feature type="transmembrane region" description="Helical" evidence="2">
    <location>
        <begin position="226"/>
        <end position="246"/>
    </location>
</feature>
<feature type="transmembrane region" description="Helical" evidence="2">
    <location>
        <begin position="288"/>
        <end position="308"/>
    </location>
</feature>
<feature type="transmembrane region" description="Helical" evidence="2">
    <location>
        <begin position="320"/>
        <end position="340"/>
    </location>
</feature>
<feature type="transmembrane region" description="Helical" evidence="2">
    <location>
        <begin position="347"/>
        <end position="367"/>
    </location>
</feature>
<feature type="binding site" description="axial binding residue" evidence="2">
    <location>
        <position position="83"/>
    </location>
    <ligand>
        <name>heme b</name>
        <dbReference type="ChEBI" id="CHEBI:60344"/>
        <label>b562</label>
    </ligand>
    <ligandPart>
        <name>Fe</name>
        <dbReference type="ChEBI" id="CHEBI:18248"/>
    </ligandPart>
</feature>
<feature type="binding site" description="axial binding residue" evidence="2">
    <location>
        <position position="97"/>
    </location>
    <ligand>
        <name>heme b</name>
        <dbReference type="ChEBI" id="CHEBI:60344"/>
        <label>b566</label>
    </ligand>
    <ligandPart>
        <name>Fe</name>
        <dbReference type="ChEBI" id="CHEBI:18248"/>
    </ligandPart>
</feature>
<feature type="binding site" description="axial binding residue" evidence="2">
    <location>
        <position position="182"/>
    </location>
    <ligand>
        <name>heme b</name>
        <dbReference type="ChEBI" id="CHEBI:60344"/>
        <label>b562</label>
    </ligand>
    <ligandPart>
        <name>Fe</name>
        <dbReference type="ChEBI" id="CHEBI:18248"/>
    </ligandPart>
</feature>
<feature type="binding site" description="axial binding residue" evidence="2">
    <location>
        <position position="196"/>
    </location>
    <ligand>
        <name>heme b</name>
        <dbReference type="ChEBI" id="CHEBI:60344"/>
        <label>b566</label>
    </ligand>
    <ligandPart>
        <name>Fe</name>
        <dbReference type="ChEBI" id="CHEBI:18248"/>
    </ligandPart>
</feature>
<feature type="binding site" evidence="2">
    <location>
        <position position="201"/>
    </location>
    <ligand>
        <name>a ubiquinone</name>
        <dbReference type="ChEBI" id="CHEBI:16389"/>
    </ligand>
</feature>
<reference key="1">
    <citation type="journal article" date="2001" name="Mol. Phylogenet. Evol.">
        <title>Molecular systematics of the family Mormoopidae (Chiroptera) based on cytochrome b and recombination activating gene 2 sequences.</title>
        <authorList>
            <person name="Lewis-Oritt N."/>
            <person name="Porter C.A."/>
            <person name="Baker R.J."/>
        </authorList>
    </citation>
    <scope>NUCLEOTIDE SEQUENCE [GENOMIC DNA]</scope>
    <source>
        <strain>Isolate TK 10336</strain>
    </source>
</reference>
<dbReference type="EMBL" id="AF338679">
    <property type="protein sequence ID" value="AAK21939.1"/>
    <property type="molecule type" value="Genomic_DNA"/>
</dbReference>
<dbReference type="SMR" id="Q9B365"/>
<dbReference type="GO" id="GO:0005743">
    <property type="term" value="C:mitochondrial inner membrane"/>
    <property type="evidence" value="ECO:0007669"/>
    <property type="project" value="UniProtKB-SubCell"/>
</dbReference>
<dbReference type="GO" id="GO:0045275">
    <property type="term" value="C:respiratory chain complex III"/>
    <property type="evidence" value="ECO:0007669"/>
    <property type="project" value="InterPro"/>
</dbReference>
<dbReference type="GO" id="GO:0046872">
    <property type="term" value="F:metal ion binding"/>
    <property type="evidence" value="ECO:0007669"/>
    <property type="project" value="UniProtKB-KW"/>
</dbReference>
<dbReference type="GO" id="GO:0008121">
    <property type="term" value="F:ubiquinol-cytochrome-c reductase activity"/>
    <property type="evidence" value="ECO:0007669"/>
    <property type="project" value="InterPro"/>
</dbReference>
<dbReference type="GO" id="GO:0006122">
    <property type="term" value="P:mitochondrial electron transport, ubiquinol to cytochrome c"/>
    <property type="evidence" value="ECO:0007669"/>
    <property type="project" value="TreeGrafter"/>
</dbReference>
<dbReference type="CDD" id="cd00290">
    <property type="entry name" value="cytochrome_b_C"/>
    <property type="match status" value="1"/>
</dbReference>
<dbReference type="CDD" id="cd00284">
    <property type="entry name" value="Cytochrome_b_N"/>
    <property type="match status" value="1"/>
</dbReference>
<dbReference type="FunFam" id="1.20.810.10:FF:000002">
    <property type="entry name" value="Cytochrome b"/>
    <property type="match status" value="1"/>
</dbReference>
<dbReference type="Gene3D" id="1.20.810.10">
    <property type="entry name" value="Cytochrome Bc1 Complex, Chain C"/>
    <property type="match status" value="1"/>
</dbReference>
<dbReference type="InterPro" id="IPR005798">
    <property type="entry name" value="Cyt_b/b6_C"/>
</dbReference>
<dbReference type="InterPro" id="IPR036150">
    <property type="entry name" value="Cyt_b/b6_C_sf"/>
</dbReference>
<dbReference type="InterPro" id="IPR005797">
    <property type="entry name" value="Cyt_b/b6_N"/>
</dbReference>
<dbReference type="InterPro" id="IPR027387">
    <property type="entry name" value="Cytb/b6-like_sf"/>
</dbReference>
<dbReference type="InterPro" id="IPR030689">
    <property type="entry name" value="Cytochrome_b"/>
</dbReference>
<dbReference type="InterPro" id="IPR048260">
    <property type="entry name" value="Cytochrome_b_C_euk/bac"/>
</dbReference>
<dbReference type="InterPro" id="IPR048259">
    <property type="entry name" value="Cytochrome_b_N_euk/bac"/>
</dbReference>
<dbReference type="InterPro" id="IPR016174">
    <property type="entry name" value="Di-haem_cyt_TM"/>
</dbReference>
<dbReference type="PANTHER" id="PTHR19271">
    <property type="entry name" value="CYTOCHROME B"/>
    <property type="match status" value="1"/>
</dbReference>
<dbReference type="PANTHER" id="PTHR19271:SF16">
    <property type="entry name" value="CYTOCHROME B"/>
    <property type="match status" value="1"/>
</dbReference>
<dbReference type="Pfam" id="PF00032">
    <property type="entry name" value="Cytochrom_B_C"/>
    <property type="match status" value="1"/>
</dbReference>
<dbReference type="Pfam" id="PF00033">
    <property type="entry name" value="Cytochrome_B"/>
    <property type="match status" value="1"/>
</dbReference>
<dbReference type="PIRSF" id="PIRSF038885">
    <property type="entry name" value="COB"/>
    <property type="match status" value="1"/>
</dbReference>
<dbReference type="SUPFAM" id="SSF81648">
    <property type="entry name" value="a domain/subunit of cytochrome bc1 complex (Ubiquinol-cytochrome c reductase)"/>
    <property type="match status" value="1"/>
</dbReference>
<dbReference type="SUPFAM" id="SSF81342">
    <property type="entry name" value="Transmembrane di-heme cytochromes"/>
    <property type="match status" value="1"/>
</dbReference>
<dbReference type="PROSITE" id="PS51003">
    <property type="entry name" value="CYTB_CTER"/>
    <property type="match status" value="1"/>
</dbReference>
<dbReference type="PROSITE" id="PS51002">
    <property type="entry name" value="CYTB_NTER"/>
    <property type="match status" value="1"/>
</dbReference>
<comment type="function">
    <text evidence="2">Component of the ubiquinol-cytochrome c reductase complex (complex III or cytochrome b-c1 complex) that is part of the mitochondrial respiratory chain. The b-c1 complex mediates electron transfer from ubiquinol to cytochrome c. Contributes to the generation of a proton gradient across the mitochondrial membrane that is then used for ATP synthesis.</text>
</comment>
<comment type="cofactor">
    <cofactor evidence="2">
        <name>heme b</name>
        <dbReference type="ChEBI" id="CHEBI:60344"/>
    </cofactor>
    <text evidence="2">Binds 2 heme b groups non-covalently.</text>
</comment>
<comment type="subunit">
    <text evidence="2">The cytochrome bc1 complex contains 11 subunits: 3 respiratory subunits (MT-CYB, CYC1 and UQCRFS1), 2 core proteins (UQCRC1 and UQCRC2) and 6 low-molecular weight proteins (UQCRH/QCR6, UQCRB/QCR7, UQCRQ/QCR8, UQCR10/QCR9, UQCR11/QCR10 and a cleavage product of UQCRFS1). This cytochrome bc1 complex then forms a dimer.</text>
</comment>
<comment type="subcellular location">
    <subcellularLocation>
        <location evidence="2">Mitochondrion inner membrane</location>
        <topology evidence="2">Multi-pass membrane protein</topology>
    </subcellularLocation>
</comment>
<comment type="miscellaneous">
    <text evidence="1">Heme 1 (or BL or b562) is low-potential and absorbs at about 562 nm, and heme 2 (or BH or b566) is high-potential and absorbs at about 566 nm.</text>
</comment>
<comment type="similarity">
    <text evidence="3 4">Belongs to the cytochrome b family.</text>
</comment>
<comment type="caution">
    <text evidence="2">The full-length protein contains only eight transmembrane helices, not nine as predicted by bioinformatics tools.</text>
</comment>
<keyword id="KW-0249">Electron transport</keyword>
<keyword id="KW-0349">Heme</keyword>
<keyword id="KW-0408">Iron</keyword>
<keyword id="KW-0472">Membrane</keyword>
<keyword id="KW-0479">Metal-binding</keyword>
<keyword id="KW-0496">Mitochondrion</keyword>
<keyword id="KW-0999">Mitochondrion inner membrane</keyword>
<keyword id="KW-0679">Respiratory chain</keyword>
<keyword id="KW-0812">Transmembrane</keyword>
<keyword id="KW-1133">Transmembrane helix</keyword>
<keyword id="KW-0813">Transport</keyword>
<keyword id="KW-0830">Ubiquinone</keyword>
<geneLocation type="mitochondrion"/>
<sequence length="379" mass="42561">MTNIRKTHPLLKIVNDSLVDLPVPSSVSSWWNFGSLLAACLAVQILTGLFLAMHYTSDTATAFNSVTHICRDVNYGWILRYLHANGASMFFICLYIHVGRGLYYGSYMYSETWNIGILLLFAVMATAFMGYVLPWGQMSFWGATVITNLLSAIPYIGTDLVQWIWGGFSVDKATLTRFFAFHFLLPFIIAALVVVHLLFLHETGSSNPTGIPSDPDMVPFHPYHTIKDILGILMMLTALSMLVLFSPDLLGDPDNYIPANPLNTPPHIKPEWYFLFAYAILRSIPNKLGGVLALVLSILILAIIPLLHTSKQRTMMFRPLSQCLFWLLVADLLTLTWIGGQPVEHPYIIIGQAASVLYFMIILLFMPLTSAMENHLLKW</sequence>
<protein>
    <recommendedName>
        <fullName>Cytochrome b</fullName>
    </recommendedName>
    <alternativeName>
        <fullName>Complex III subunit 3</fullName>
    </alternativeName>
    <alternativeName>
        <fullName>Complex III subunit III</fullName>
    </alternativeName>
    <alternativeName>
        <fullName>Cytochrome b-c1 complex subunit 3</fullName>
    </alternativeName>
    <alternativeName>
        <fullName>Ubiquinol-cytochrome-c reductase complex cytochrome b subunit</fullName>
    </alternativeName>
</protein>